<reference key="1">
    <citation type="journal article" date="2007" name="Genome Biol.">
        <title>Genome analysis and genome-wide proteomics of Thermococcus gammatolerans, the most radioresistant organism known amongst the Archaea.</title>
        <authorList>
            <person name="Zivanovic Y."/>
            <person name="Armengaud J."/>
            <person name="Lagorce A."/>
            <person name="Leplat C."/>
            <person name="Guerin P."/>
            <person name="Dutertre M."/>
            <person name="Anthouard V."/>
            <person name="Forterre P."/>
            <person name="Wincker P."/>
            <person name="Confalonieri F."/>
        </authorList>
    </citation>
    <scope>NUCLEOTIDE SEQUENCE [LARGE SCALE GENOMIC DNA]</scope>
    <source>
        <strain>DSM 15229 / JCM 11827 / EJ3</strain>
    </source>
</reference>
<keyword id="KW-0963">Cytoplasm</keyword>
<keyword id="KW-0251">Elongation factor</keyword>
<keyword id="KW-0342">GTP-binding</keyword>
<keyword id="KW-0378">Hydrolase</keyword>
<keyword id="KW-0460">Magnesium</keyword>
<keyword id="KW-0479">Metal-binding</keyword>
<keyword id="KW-0547">Nucleotide-binding</keyword>
<keyword id="KW-0648">Protein biosynthesis</keyword>
<keyword id="KW-1185">Reference proteome</keyword>
<feature type="chain" id="PRO_1000203022" description="Elongation factor 1-alpha">
    <location>
        <begin position="1"/>
        <end position="428"/>
    </location>
</feature>
<feature type="domain" description="tr-type G">
    <location>
        <begin position="5"/>
        <end position="215"/>
    </location>
</feature>
<feature type="region of interest" description="G1" evidence="1">
    <location>
        <begin position="14"/>
        <end position="21"/>
    </location>
</feature>
<feature type="region of interest" description="G2" evidence="1">
    <location>
        <begin position="68"/>
        <end position="72"/>
    </location>
</feature>
<feature type="region of interest" description="G3" evidence="1">
    <location>
        <begin position="89"/>
        <end position="92"/>
    </location>
</feature>
<feature type="region of interest" description="G4" evidence="1">
    <location>
        <begin position="144"/>
        <end position="147"/>
    </location>
</feature>
<feature type="region of interest" description="G5" evidence="1">
    <location>
        <begin position="181"/>
        <end position="183"/>
    </location>
</feature>
<feature type="binding site" evidence="2">
    <location>
        <begin position="14"/>
        <end position="21"/>
    </location>
    <ligand>
        <name>GTP</name>
        <dbReference type="ChEBI" id="CHEBI:37565"/>
    </ligand>
</feature>
<feature type="binding site" evidence="2">
    <location>
        <position position="21"/>
    </location>
    <ligand>
        <name>Mg(2+)</name>
        <dbReference type="ChEBI" id="CHEBI:18420"/>
    </ligand>
</feature>
<feature type="binding site" evidence="2">
    <location>
        <begin position="89"/>
        <end position="93"/>
    </location>
    <ligand>
        <name>GTP</name>
        <dbReference type="ChEBI" id="CHEBI:37565"/>
    </ligand>
</feature>
<feature type="binding site" evidence="2">
    <location>
        <begin position="144"/>
        <end position="147"/>
    </location>
    <ligand>
        <name>GTP</name>
        <dbReference type="ChEBI" id="CHEBI:37565"/>
    </ligand>
</feature>
<sequence length="428" mass="47515">MAKEKPHVNIVFIGHVDHGKSTTIGRLLFDTANIPENIIKKFEEMGEKGKSFKFAWVMDRLKEERERGITIDVAHTKFETPHRYITIIDAPGHRDFVKNMITGASQADAAVLVVAATDGVMPQTKEHAFLARTLGINHIIVAINKMDMVNYDQKVFEKVKAQVEKLLKMLGYKDFPVIPISAWEGDNVVKKSDKMPWYKGPTLIEALDQIPEPPKPIDKPLRIPIQDVYSIKGVGTVPVGRVETGVLRVGDVVIFEPASTIFHKPIQGEVKSIEMHHEPLQEAYPGDNIGFNVRGVGKNDIKRGDVAGHTTNPPTVVRPKDTFKAQIIVLNHPTAITVGYTPVLHAHTTQVAVRFEQLLAKLDPRTGNIVEENPQFIKTGDSAIVILRPTKAMVIEPVKEIPQMGRFAIRDMGQTVAAGMVISIQKAE</sequence>
<comment type="function">
    <text evidence="2">GTP hydrolase that promotes the GTP-dependent binding of aminoacyl-tRNA to the A-site of ribosomes during protein biosynthesis.</text>
</comment>
<comment type="catalytic activity">
    <reaction evidence="2">
        <text>GTP + H2O = GDP + phosphate + H(+)</text>
        <dbReference type="Rhea" id="RHEA:19669"/>
        <dbReference type="ChEBI" id="CHEBI:15377"/>
        <dbReference type="ChEBI" id="CHEBI:15378"/>
        <dbReference type="ChEBI" id="CHEBI:37565"/>
        <dbReference type="ChEBI" id="CHEBI:43474"/>
        <dbReference type="ChEBI" id="CHEBI:58189"/>
        <dbReference type="EC" id="3.6.5.3"/>
    </reaction>
    <physiologicalReaction direction="left-to-right" evidence="2">
        <dbReference type="Rhea" id="RHEA:19670"/>
    </physiologicalReaction>
</comment>
<comment type="subcellular location">
    <subcellularLocation>
        <location evidence="2">Cytoplasm</location>
    </subcellularLocation>
</comment>
<comment type="similarity">
    <text evidence="2">Belongs to the TRAFAC class translation factor GTPase superfamily. Classic translation factor GTPase family. EF-Tu/EF-1A subfamily.</text>
</comment>
<name>EF1A_THEGJ</name>
<accession>C5A5P4</accession>
<organism>
    <name type="scientific">Thermococcus gammatolerans (strain DSM 15229 / JCM 11827 / EJ3)</name>
    <dbReference type="NCBI Taxonomy" id="593117"/>
    <lineage>
        <taxon>Archaea</taxon>
        <taxon>Methanobacteriati</taxon>
        <taxon>Methanobacteriota</taxon>
        <taxon>Thermococci</taxon>
        <taxon>Thermococcales</taxon>
        <taxon>Thermococcaceae</taxon>
        <taxon>Thermococcus</taxon>
    </lineage>
</organism>
<gene>
    <name evidence="2" type="primary">tuf</name>
    <name type="ordered locus">TGAM_1054</name>
</gene>
<protein>
    <recommendedName>
        <fullName evidence="2">Elongation factor 1-alpha</fullName>
        <shortName evidence="2">EF-1-alpha</shortName>
        <ecNumber evidence="2">3.6.5.3</ecNumber>
    </recommendedName>
    <alternativeName>
        <fullName evidence="2">Elongation factor Tu</fullName>
        <shortName evidence="2">EF-Tu</shortName>
    </alternativeName>
</protein>
<evidence type="ECO:0000250" key="1"/>
<evidence type="ECO:0000255" key="2">
    <source>
        <dbReference type="HAMAP-Rule" id="MF_00118"/>
    </source>
</evidence>
<dbReference type="EC" id="3.6.5.3" evidence="2"/>
<dbReference type="EMBL" id="CP001398">
    <property type="protein sequence ID" value="ACS33556.1"/>
    <property type="molecule type" value="Genomic_DNA"/>
</dbReference>
<dbReference type="RefSeq" id="WP_015858670.1">
    <property type="nucleotide sequence ID" value="NC_012804.1"/>
</dbReference>
<dbReference type="SMR" id="C5A5P4"/>
<dbReference type="STRING" id="593117.TGAM_1054"/>
<dbReference type="PaxDb" id="593117-TGAM_1054"/>
<dbReference type="GeneID" id="7986928"/>
<dbReference type="KEGG" id="tga:TGAM_1054"/>
<dbReference type="PATRIC" id="fig|593117.10.peg.1051"/>
<dbReference type="eggNOG" id="arCOG01561">
    <property type="taxonomic scope" value="Archaea"/>
</dbReference>
<dbReference type="HOGENOM" id="CLU_007265_0_0_2"/>
<dbReference type="OrthoDB" id="371718at2157"/>
<dbReference type="Proteomes" id="UP000001488">
    <property type="component" value="Chromosome"/>
</dbReference>
<dbReference type="GO" id="GO:0005737">
    <property type="term" value="C:cytoplasm"/>
    <property type="evidence" value="ECO:0007669"/>
    <property type="project" value="UniProtKB-SubCell"/>
</dbReference>
<dbReference type="GO" id="GO:0005525">
    <property type="term" value="F:GTP binding"/>
    <property type="evidence" value="ECO:0007669"/>
    <property type="project" value="UniProtKB-UniRule"/>
</dbReference>
<dbReference type="GO" id="GO:0003924">
    <property type="term" value="F:GTPase activity"/>
    <property type="evidence" value="ECO:0007669"/>
    <property type="project" value="InterPro"/>
</dbReference>
<dbReference type="GO" id="GO:0003746">
    <property type="term" value="F:translation elongation factor activity"/>
    <property type="evidence" value="ECO:0007669"/>
    <property type="project" value="UniProtKB-UniRule"/>
</dbReference>
<dbReference type="CDD" id="cd01883">
    <property type="entry name" value="EF1_alpha"/>
    <property type="match status" value="1"/>
</dbReference>
<dbReference type="CDD" id="cd03693">
    <property type="entry name" value="EF1_alpha_II"/>
    <property type="match status" value="1"/>
</dbReference>
<dbReference type="CDD" id="cd03705">
    <property type="entry name" value="EF1_alpha_III"/>
    <property type="match status" value="1"/>
</dbReference>
<dbReference type="FunFam" id="2.40.30.10:FF:000003">
    <property type="entry name" value="Elongation factor 1-alpha"/>
    <property type="match status" value="1"/>
</dbReference>
<dbReference type="FunFam" id="2.40.30.10:FF:000005">
    <property type="entry name" value="Elongation factor 1-alpha"/>
    <property type="match status" value="1"/>
</dbReference>
<dbReference type="Gene3D" id="3.40.50.300">
    <property type="entry name" value="P-loop containing nucleotide triphosphate hydrolases"/>
    <property type="match status" value="1"/>
</dbReference>
<dbReference type="Gene3D" id="2.40.30.10">
    <property type="entry name" value="Translation factors"/>
    <property type="match status" value="2"/>
</dbReference>
<dbReference type="HAMAP" id="MF_00118_A">
    <property type="entry name" value="EF_Tu_A"/>
    <property type="match status" value="1"/>
</dbReference>
<dbReference type="InterPro" id="IPR004161">
    <property type="entry name" value="EFTu-like_2"/>
</dbReference>
<dbReference type="InterPro" id="IPR031157">
    <property type="entry name" value="G_TR_CS"/>
</dbReference>
<dbReference type="InterPro" id="IPR054696">
    <property type="entry name" value="GTP-eEF1A_C"/>
</dbReference>
<dbReference type="InterPro" id="IPR027417">
    <property type="entry name" value="P-loop_NTPase"/>
</dbReference>
<dbReference type="InterPro" id="IPR005225">
    <property type="entry name" value="Small_GTP-bd"/>
</dbReference>
<dbReference type="InterPro" id="IPR000795">
    <property type="entry name" value="T_Tr_GTP-bd_dom"/>
</dbReference>
<dbReference type="InterPro" id="IPR050100">
    <property type="entry name" value="TRAFAC_GTPase_members"/>
</dbReference>
<dbReference type="InterPro" id="IPR009000">
    <property type="entry name" value="Transl_B-barrel_sf"/>
</dbReference>
<dbReference type="InterPro" id="IPR009001">
    <property type="entry name" value="Transl_elong_EF1A/Init_IF2_C"/>
</dbReference>
<dbReference type="InterPro" id="IPR004539">
    <property type="entry name" value="Transl_elong_EF1A_euk/arc"/>
</dbReference>
<dbReference type="NCBIfam" id="TIGR00483">
    <property type="entry name" value="EF-1_alpha"/>
    <property type="match status" value="1"/>
</dbReference>
<dbReference type="NCBIfam" id="NF008969">
    <property type="entry name" value="PRK12317.1"/>
    <property type="match status" value="1"/>
</dbReference>
<dbReference type="NCBIfam" id="TIGR00231">
    <property type="entry name" value="small_GTP"/>
    <property type="match status" value="1"/>
</dbReference>
<dbReference type="PANTHER" id="PTHR23115">
    <property type="entry name" value="TRANSLATION FACTOR"/>
    <property type="match status" value="1"/>
</dbReference>
<dbReference type="Pfam" id="PF22594">
    <property type="entry name" value="GTP-eEF1A_C"/>
    <property type="match status" value="1"/>
</dbReference>
<dbReference type="Pfam" id="PF00009">
    <property type="entry name" value="GTP_EFTU"/>
    <property type="match status" value="1"/>
</dbReference>
<dbReference type="Pfam" id="PF03144">
    <property type="entry name" value="GTP_EFTU_D2"/>
    <property type="match status" value="1"/>
</dbReference>
<dbReference type="PRINTS" id="PR00315">
    <property type="entry name" value="ELONGATNFCT"/>
</dbReference>
<dbReference type="SUPFAM" id="SSF50465">
    <property type="entry name" value="EF-Tu/eEF-1alpha/eIF2-gamma C-terminal domain"/>
    <property type="match status" value="1"/>
</dbReference>
<dbReference type="SUPFAM" id="SSF52540">
    <property type="entry name" value="P-loop containing nucleoside triphosphate hydrolases"/>
    <property type="match status" value="1"/>
</dbReference>
<dbReference type="SUPFAM" id="SSF50447">
    <property type="entry name" value="Translation proteins"/>
    <property type="match status" value="1"/>
</dbReference>
<dbReference type="PROSITE" id="PS00301">
    <property type="entry name" value="G_TR_1"/>
    <property type="match status" value="1"/>
</dbReference>
<dbReference type="PROSITE" id="PS51722">
    <property type="entry name" value="G_TR_2"/>
    <property type="match status" value="1"/>
</dbReference>
<proteinExistence type="inferred from homology"/>